<proteinExistence type="evidence at transcript level"/>
<accession>Q60764</accession>
<accession>Q3UY92</accession>
<accession>Q7TQE4</accession>
<sequence length="544" mass="59434">MEESTAPIEAHAAAGAEAGAEGGEGVSVPPPPQFEAAGASAGVSSAPLQQASGLAPLLVTPGPAIRRAASLRPAPAEGGGARSGPERNSGSWTKQILCRYYLHGQCKEGDNCRYSHDLSGRRRSRGGQDAQPRASADRGPKMATRWEPPTQEVAEAPPAASSSSLPLIGSAAERGFTEAEIDNAGIRSAAERGFSEAEIDNASLAAGAAAGAGAEGWEGAIEFVPGQPYRGRMVPPHGPEAPLQSPAIEREHMAMGMGMPMPVPMPMPVPMPVPMPLPLCRYAARGQCLRGDRCAYPHGEICDMCGQQALHPWDAAQQEAHRRACVEAHERDMELSFAVQRSMDKVCGICMEVVYEKADPSDRRFGILFSCNHTYCLRCIRRWRSATQFENRISKSCPQCRVSSGFVIPSEFWVEEEEEKEKLVQQYKEGMSQKACRYFAGGLGHCPFGEFCFYKHEYPEGWRDQPPRPDGGGSSSAYWHQVLEPVQLREGNVLFKSRKKEHSVLRLANQLLKKLLCLRGSSSFSDDRWLLLQYQLEEYFSLNL</sequence>
<name>MKRN3_MOUSE</name>
<feature type="chain" id="PRO_0000055960" description="E3 ubiquitin-protein ligase makorin-3">
    <location>
        <begin position="1"/>
        <end position="544"/>
    </location>
</feature>
<feature type="zinc finger region" description="C3H1-type 1" evidence="3">
    <location>
        <begin position="92"/>
        <end position="119"/>
    </location>
</feature>
<feature type="zinc finger region" description="C3H1-type 2" evidence="3">
    <location>
        <begin position="274"/>
        <end position="301"/>
    </location>
</feature>
<feature type="zinc finger region" description="RING-type" evidence="2">
    <location>
        <begin position="347"/>
        <end position="401"/>
    </location>
</feature>
<feature type="zinc finger region" description="C3H1-type 3" evidence="3">
    <location>
        <begin position="430"/>
        <end position="459"/>
    </location>
</feature>
<feature type="region of interest" description="Disordered" evidence="4">
    <location>
        <begin position="1"/>
        <end position="46"/>
    </location>
</feature>
<feature type="region of interest" description="Disordered" evidence="4">
    <location>
        <begin position="117"/>
        <end position="144"/>
    </location>
</feature>
<feature type="region of interest" description="Makorin-type Cys-His">
    <location>
        <begin position="302"/>
        <end position="329"/>
    </location>
</feature>
<feature type="compositionally biased region" description="Low complexity" evidence="4">
    <location>
        <begin position="9"/>
        <end position="19"/>
    </location>
</feature>
<feature type="compositionally biased region" description="Low complexity" evidence="4">
    <location>
        <begin position="36"/>
        <end position="46"/>
    </location>
</feature>
<feature type="sequence conflict" description="In Ref. 1; AAA76863." evidence="11" ref="1">
    <original>A</original>
    <variation>V</variation>
    <location>
        <position position="154"/>
    </location>
</feature>
<feature type="sequence conflict" description="In Ref. 1; AAA76863." evidence="11" ref="1">
    <original>M</original>
    <variation>V</variation>
    <location>
        <position position="233"/>
    </location>
</feature>
<feature type="sequence conflict" description="In Ref. 1; AAA76863." evidence="11" ref="1">
    <original>S</original>
    <variation>T</variation>
    <location>
        <position position="361"/>
    </location>
</feature>
<protein>
    <recommendedName>
        <fullName>E3 ubiquitin-protein ligase makorin-3</fullName>
        <ecNumber>2.3.2.27</ecNumber>
    </recommendedName>
    <alternativeName>
        <fullName evidence="11">RING-type E3 ubiquitin transferase makorin-3</fullName>
    </alternativeName>
    <alternativeName>
        <fullName>Zinc finger protein 127</fullName>
    </alternativeName>
</protein>
<reference key="1">
    <citation type="journal article" date="1999" name="Hum. Mol. Genet.">
        <title>Imprinting of a RING zinc-finger encoding gene in the mouse chromosome region homologous to the Prader-Willi syndrome genetic region.</title>
        <authorList>
            <person name="Jong M.T.C."/>
            <person name="Carey A.H."/>
            <person name="Caldwell K.A."/>
            <person name="Lau M.H."/>
            <person name="Handel M.A."/>
            <person name="Driscoll D.J."/>
            <person name="Stewart C.L."/>
            <person name="Rinchik E.M."/>
            <person name="Nicholls R.D."/>
        </authorList>
    </citation>
    <scope>NUCLEOTIDE SEQUENCE [GENOMIC DNA]</scope>
    <scope>TISSUE SPECIFICITY</scope>
    <scope>DEVELOPMENTAL STAGE</scope>
</reference>
<reference key="2">
    <citation type="journal article" date="2005" name="Science">
        <title>The transcriptional landscape of the mammalian genome.</title>
        <authorList>
            <person name="Carninci P."/>
            <person name="Kasukawa T."/>
            <person name="Katayama S."/>
            <person name="Gough J."/>
            <person name="Frith M.C."/>
            <person name="Maeda N."/>
            <person name="Oyama R."/>
            <person name="Ravasi T."/>
            <person name="Lenhard B."/>
            <person name="Wells C."/>
            <person name="Kodzius R."/>
            <person name="Shimokawa K."/>
            <person name="Bajic V.B."/>
            <person name="Brenner S.E."/>
            <person name="Batalov S."/>
            <person name="Forrest A.R."/>
            <person name="Zavolan M."/>
            <person name="Davis M.J."/>
            <person name="Wilming L.G."/>
            <person name="Aidinis V."/>
            <person name="Allen J.E."/>
            <person name="Ambesi-Impiombato A."/>
            <person name="Apweiler R."/>
            <person name="Aturaliya R.N."/>
            <person name="Bailey T.L."/>
            <person name="Bansal M."/>
            <person name="Baxter L."/>
            <person name="Beisel K.W."/>
            <person name="Bersano T."/>
            <person name="Bono H."/>
            <person name="Chalk A.M."/>
            <person name="Chiu K.P."/>
            <person name="Choudhary V."/>
            <person name="Christoffels A."/>
            <person name="Clutterbuck D.R."/>
            <person name="Crowe M.L."/>
            <person name="Dalla E."/>
            <person name="Dalrymple B.P."/>
            <person name="de Bono B."/>
            <person name="Della Gatta G."/>
            <person name="di Bernardo D."/>
            <person name="Down T."/>
            <person name="Engstrom P."/>
            <person name="Fagiolini M."/>
            <person name="Faulkner G."/>
            <person name="Fletcher C.F."/>
            <person name="Fukushima T."/>
            <person name="Furuno M."/>
            <person name="Futaki S."/>
            <person name="Gariboldi M."/>
            <person name="Georgii-Hemming P."/>
            <person name="Gingeras T.R."/>
            <person name="Gojobori T."/>
            <person name="Green R.E."/>
            <person name="Gustincich S."/>
            <person name="Harbers M."/>
            <person name="Hayashi Y."/>
            <person name="Hensch T.K."/>
            <person name="Hirokawa N."/>
            <person name="Hill D."/>
            <person name="Huminiecki L."/>
            <person name="Iacono M."/>
            <person name="Ikeo K."/>
            <person name="Iwama A."/>
            <person name="Ishikawa T."/>
            <person name="Jakt M."/>
            <person name="Kanapin A."/>
            <person name="Katoh M."/>
            <person name="Kawasawa Y."/>
            <person name="Kelso J."/>
            <person name="Kitamura H."/>
            <person name="Kitano H."/>
            <person name="Kollias G."/>
            <person name="Krishnan S.P."/>
            <person name="Kruger A."/>
            <person name="Kummerfeld S.K."/>
            <person name="Kurochkin I.V."/>
            <person name="Lareau L.F."/>
            <person name="Lazarevic D."/>
            <person name="Lipovich L."/>
            <person name="Liu J."/>
            <person name="Liuni S."/>
            <person name="McWilliam S."/>
            <person name="Madan Babu M."/>
            <person name="Madera M."/>
            <person name="Marchionni L."/>
            <person name="Matsuda H."/>
            <person name="Matsuzawa S."/>
            <person name="Miki H."/>
            <person name="Mignone F."/>
            <person name="Miyake S."/>
            <person name="Morris K."/>
            <person name="Mottagui-Tabar S."/>
            <person name="Mulder N."/>
            <person name="Nakano N."/>
            <person name="Nakauchi H."/>
            <person name="Ng P."/>
            <person name="Nilsson R."/>
            <person name="Nishiguchi S."/>
            <person name="Nishikawa S."/>
            <person name="Nori F."/>
            <person name="Ohara O."/>
            <person name="Okazaki Y."/>
            <person name="Orlando V."/>
            <person name="Pang K.C."/>
            <person name="Pavan W.J."/>
            <person name="Pavesi G."/>
            <person name="Pesole G."/>
            <person name="Petrovsky N."/>
            <person name="Piazza S."/>
            <person name="Reed J."/>
            <person name="Reid J.F."/>
            <person name="Ring B.Z."/>
            <person name="Ringwald M."/>
            <person name="Rost B."/>
            <person name="Ruan Y."/>
            <person name="Salzberg S.L."/>
            <person name="Sandelin A."/>
            <person name="Schneider C."/>
            <person name="Schoenbach C."/>
            <person name="Sekiguchi K."/>
            <person name="Semple C.A."/>
            <person name="Seno S."/>
            <person name="Sessa L."/>
            <person name="Sheng Y."/>
            <person name="Shibata Y."/>
            <person name="Shimada H."/>
            <person name="Shimada K."/>
            <person name="Silva D."/>
            <person name="Sinclair B."/>
            <person name="Sperling S."/>
            <person name="Stupka E."/>
            <person name="Sugiura K."/>
            <person name="Sultana R."/>
            <person name="Takenaka Y."/>
            <person name="Taki K."/>
            <person name="Tammoja K."/>
            <person name="Tan S.L."/>
            <person name="Tang S."/>
            <person name="Taylor M.S."/>
            <person name="Tegner J."/>
            <person name="Teichmann S.A."/>
            <person name="Ueda H.R."/>
            <person name="van Nimwegen E."/>
            <person name="Verardo R."/>
            <person name="Wei C.L."/>
            <person name="Yagi K."/>
            <person name="Yamanishi H."/>
            <person name="Zabarovsky E."/>
            <person name="Zhu S."/>
            <person name="Zimmer A."/>
            <person name="Hide W."/>
            <person name="Bult C."/>
            <person name="Grimmond S.M."/>
            <person name="Teasdale R.D."/>
            <person name="Liu E.T."/>
            <person name="Brusic V."/>
            <person name="Quackenbush J."/>
            <person name="Wahlestedt C."/>
            <person name="Mattick J.S."/>
            <person name="Hume D.A."/>
            <person name="Kai C."/>
            <person name="Sasaki D."/>
            <person name="Tomaru Y."/>
            <person name="Fukuda S."/>
            <person name="Kanamori-Katayama M."/>
            <person name="Suzuki M."/>
            <person name="Aoki J."/>
            <person name="Arakawa T."/>
            <person name="Iida J."/>
            <person name="Imamura K."/>
            <person name="Itoh M."/>
            <person name="Kato T."/>
            <person name="Kawaji H."/>
            <person name="Kawagashira N."/>
            <person name="Kawashima T."/>
            <person name="Kojima M."/>
            <person name="Kondo S."/>
            <person name="Konno H."/>
            <person name="Nakano K."/>
            <person name="Ninomiya N."/>
            <person name="Nishio T."/>
            <person name="Okada M."/>
            <person name="Plessy C."/>
            <person name="Shibata K."/>
            <person name="Shiraki T."/>
            <person name="Suzuki S."/>
            <person name="Tagami M."/>
            <person name="Waki K."/>
            <person name="Watahiki A."/>
            <person name="Okamura-Oho Y."/>
            <person name="Suzuki H."/>
            <person name="Kawai J."/>
            <person name="Hayashizaki Y."/>
        </authorList>
    </citation>
    <scope>NUCLEOTIDE SEQUENCE [LARGE SCALE MRNA]</scope>
    <source>
        <strain>C57BL/6J</strain>
        <tissue>Olfactory bulb</tissue>
    </source>
</reference>
<reference key="3">
    <citation type="journal article" date="2004" name="Genome Res.">
        <title>The status, quality, and expansion of the NIH full-length cDNA project: the Mammalian Gene Collection (MGC).</title>
        <authorList>
            <consortium name="The MGC Project Team"/>
        </authorList>
    </citation>
    <scope>NUCLEOTIDE SEQUENCE [LARGE SCALE MRNA]</scope>
    <source>
        <strain>C57BL/6J</strain>
        <tissue>Brain</tissue>
    </source>
</reference>
<reference key="4">
    <citation type="journal article" date="1999" name="Gene">
        <title>Imprinted methylation and its effect on expression of the mouse Zfp127 gene.</title>
        <authorList>
            <person name="Hershko A."/>
            <person name="Razin A."/>
            <person name="Shemer R."/>
        </authorList>
    </citation>
    <scope>IMPRINTING</scope>
</reference>
<reference key="5">
    <citation type="journal article" date="2003" name="Gene Expr. Patterns">
        <title>Prader-Willi syndrome transcripts are expressed in phenotypically significant regions of the developing mouse brain.</title>
        <authorList>
            <person name="Lee S."/>
            <person name="Walker C.L."/>
            <person name="Wevrick R."/>
        </authorList>
    </citation>
    <scope>TISSUE SPECIFICITY</scope>
</reference>
<reference key="6">
    <citation type="journal article" date="2013" name="N. Engl. J. Med.">
        <title>Central precocious puberty caused by mutations in the imprinted gene MKRN3.</title>
        <authorList>
            <person name="Abreu A.P."/>
            <person name="Dauber A."/>
            <person name="Macedo D.B."/>
            <person name="Noel S.D."/>
            <person name="Brito V.N."/>
            <person name="Gill J.C."/>
            <person name="Cukier P."/>
            <person name="Thompson I.R."/>
            <person name="Navarro V.M."/>
            <person name="Gagliardi P.C."/>
            <person name="Rodrigues T."/>
            <person name="Kochi C."/>
            <person name="Longui C.A."/>
            <person name="Beckers D."/>
            <person name="de Zegher F."/>
            <person name="Montenegro L.R."/>
            <person name="Mendonca B.B."/>
            <person name="Carroll R.S."/>
            <person name="Hirschhorn J.N."/>
            <person name="Latronico A.C."/>
            <person name="Kaiser U.B."/>
        </authorList>
    </citation>
    <scope>DEVELOPMENTAL STAGE</scope>
</reference>
<reference key="7">
    <citation type="journal article" date="2020" name="Natl Sci Rev">
        <title>MKRN3 regulates the epigenetic switch of mammalian puberty via ubiquitination of MBD3.</title>
        <authorList>
            <person name="Li C."/>
            <person name="Lu W."/>
            <person name="Yang L."/>
            <person name="Li Z."/>
            <person name="Zhou X."/>
            <person name="Guo R."/>
            <person name="Wang J."/>
            <person name="Wu Z."/>
            <person name="Dong Z."/>
            <person name="Ning G."/>
            <person name="Shi Y."/>
            <person name="Gu Y."/>
            <person name="Chen P."/>
            <person name="Hao Z."/>
            <person name="Han T."/>
            <person name="Yang M."/>
            <person name="Wang W."/>
            <person name="Huang X."/>
            <person name="Li Y."/>
            <person name="Gao S."/>
            <person name="Hu R."/>
        </authorList>
    </citation>
    <scope>FUNCTION</scope>
    <scope>DISRUPTION PHENOTYPE</scope>
    <scope>SUBCELLULAR LOCATION</scope>
</reference>
<reference key="8">
    <citation type="journal article" date="2021" name="Nucleic Acids Res.">
        <title>MKRN3-mediated ubiquitination of Poly(A)-binding proteins modulates the stability and translation of GNRH1 mRNA in mammalian puberty.</title>
        <authorList>
            <person name="Li C."/>
            <person name="Han T."/>
            <person name="Li Q."/>
            <person name="Zhang M."/>
            <person name="Guo R."/>
            <person name="Yang Y."/>
            <person name="Lu W."/>
            <person name="Li Z."/>
            <person name="Peng C."/>
            <person name="Wu P."/>
            <person name="Tian X."/>
            <person name="Wang Q."/>
            <person name="Wang Y."/>
            <person name="Zhou V."/>
            <person name="Han Z."/>
            <person name="Li H."/>
            <person name="Wang F."/>
            <person name="Hu R."/>
        </authorList>
    </citation>
    <scope>FUNCTION</scope>
    <scope>TISSUE SPECIFICITY</scope>
</reference>
<reference key="9">
    <citation type="journal article" date="2023" name="JCI Insight">
        <title>MKRN3 inhibits puberty onset via interaction with IGF2BP1 and regulation of hypothalamic plasticity.</title>
        <authorList>
            <person name="Naule L."/>
            <person name="Mancini A."/>
            <person name="Pereira S.A."/>
            <person name="Gassaway B.M."/>
            <person name="Lydeard J.R."/>
            <person name="Magnotto J.C."/>
            <person name="Kim H.K."/>
            <person name="Liang J."/>
            <person name="Matos C."/>
            <person name="Gygi S.P."/>
            <person name="Merkle F.T."/>
            <person name="Carroll R.S."/>
            <person name="Abreu A.P."/>
            <person name="Kaiser U.B."/>
        </authorList>
    </citation>
    <scope>FUNCTION</scope>
    <scope>DISRUPTION PHENOTYPE</scope>
</reference>
<organism>
    <name type="scientific">Mus musculus</name>
    <name type="common">Mouse</name>
    <dbReference type="NCBI Taxonomy" id="10090"/>
    <lineage>
        <taxon>Eukaryota</taxon>
        <taxon>Metazoa</taxon>
        <taxon>Chordata</taxon>
        <taxon>Craniata</taxon>
        <taxon>Vertebrata</taxon>
        <taxon>Euteleostomi</taxon>
        <taxon>Mammalia</taxon>
        <taxon>Eutheria</taxon>
        <taxon>Euarchontoglires</taxon>
        <taxon>Glires</taxon>
        <taxon>Rodentia</taxon>
        <taxon>Myomorpha</taxon>
        <taxon>Muroidea</taxon>
        <taxon>Muridae</taxon>
        <taxon>Murinae</taxon>
        <taxon>Mus</taxon>
        <taxon>Mus</taxon>
    </lineage>
</organism>
<keyword id="KW-0479">Metal-binding</keyword>
<keyword id="KW-0539">Nucleus</keyword>
<keyword id="KW-1185">Reference proteome</keyword>
<keyword id="KW-0677">Repeat</keyword>
<keyword id="KW-0808">Transferase</keyword>
<keyword id="KW-0833">Ubl conjugation pathway</keyword>
<keyword id="KW-0862">Zinc</keyword>
<keyword id="KW-0863">Zinc-finger</keyword>
<gene>
    <name type="primary">Mkrn3</name>
    <name type="synonym">Zfp127</name>
    <name type="synonym">Znf127</name>
</gene>
<dbReference type="EC" id="2.3.2.27"/>
<dbReference type="EMBL" id="U19106">
    <property type="protein sequence ID" value="AAA76863.1"/>
    <property type="molecule type" value="Genomic_DNA"/>
</dbReference>
<dbReference type="EMBL" id="AK134870">
    <property type="protein sequence ID" value="BAE22320.1"/>
    <property type="molecule type" value="mRNA"/>
</dbReference>
<dbReference type="EMBL" id="BC054771">
    <property type="protein sequence ID" value="AAH54771.1"/>
    <property type="molecule type" value="mRNA"/>
</dbReference>
<dbReference type="CCDS" id="CCDS21327.1"/>
<dbReference type="RefSeq" id="NP_035876.2">
    <property type="nucleotide sequence ID" value="NM_011746.3"/>
</dbReference>
<dbReference type="BioGRID" id="204637">
    <property type="interactions" value="1"/>
</dbReference>
<dbReference type="FunCoup" id="Q60764">
    <property type="interactions" value="701"/>
</dbReference>
<dbReference type="STRING" id="10090.ENSMUSP00000091898"/>
<dbReference type="iPTMnet" id="Q60764"/>
<dbReference type="PhosphoSitePlus" id="Q60764"/>
<dbReference type="PaxDb" id="10090-ENSMUSP00000091898"/>
<dbReference type="ProteomicsDB" id="295913"/>
<dbReference type="Antibodypedia" id="22273">
    <property type="antibodies" value="88 antibodies from 19 providers"/>
</dbReference>
<dbReference type="DNASU" id="22652"/>
<dbReference type="Ensembl" id="ENSMUST00000094340.4">
    <property type="protein sequence ID" value="ENSMUSP00000091898.4"/>
    <property type="gene ID" value="ENSMUSG00000070527.4"/>
</dbReference>
<dbReference type="GeneID" id="22652"/>
<dbReference type="KEGG" id="mmu:22652"/>
<dbReference type="UCSC" id="uc009hfi.1">
    <property type="organism name" value="mouse"/>
</dbReference>
<dbReference type="AGR" id="MGI:2181178"/>
<dbReference type="CTD" id="7681"/>
<dbReference type="MGI" id="MGI:2181178">
    <property type="gene designation" value="Mkrn3"/>
</dbReference>
<dbReference type="VEuPathDB" id="HostDB:ENSMUSG00000070527"/>
<dbReference type="eggNOG" id="KOG1039">
    <property type="taxonomic scope" value="Eukaryota"/>
</dbReference>
<dbReference type="GeneTree" id="ENSGT00950000183077"/>
<dbReference type="HOGENOM" id="CLU_040815_4_1_1"/>
<dbReference type="InParanoid" id="Q60764"/>
<dbReference type="OMA" id="NKTCRYF"/>
<dbReference type="OrthoDB" id="411372at2759"/>
<dbReference type="PhylomeDB" id="Q60764"/>
<dbReference type="TreeFam" id="TF315108"/>
<dbReference type="UniPathway" id="UPA00143"/>
<dbReference type="BioGRID-ORCS" id="22652">
    <property type="hits" value="3 hits in 80 CRISPR screens"/>
</dbReference>
<dbReference type="PRO" id="PR:Q60764"/>
<dbReference type="Proteomes" id="UP000000589">
    <property type="component" value="Chromosome 7"/>
</dbReference>
<dbReference type="RNAct" id="Q60764">
    <property type="molecule type" value="protein"/>
</dbReference>
<dbReference type="Bgee" id="ENSMUSG00000070527">
    <property type="expression patterns" value="Expressed in medial ganglionic eminence and 106 other cell types or tissues"/>
</dbReference>
<dbReference type="GO" id="GO:0005634">
    <property type="term" value="C:nucleus"/>
    <property type="evidence" value="ECO:0007669"/>
    <property type="project" value="UniProtKB-SubCell"/>
</dbReference>
<dbReference type="GO" id="GO:0042802">
    <property type="term" value="F:identical protein binding"/>
    <property type="evidence" value="ECO:0007669"/>
    <property type="project" value="Ensembl"/>
</dbReference>
<dbReference type="GO" id="GO:0061630">
    <property type="term" value="F:ubiquitin protein ligase activity"/>
    <property type="evidence" value="ECO:0007669"/>
    <property type="project" value="InterPro"/>
</dbReference>
<dbReference type="GO" id="GO:0008270">
    <property type="term" value="F:zinc ion binding"/>
    <property type="evidence" value="ECO:0007669"/>
    <property type="project" value="UniProtKB-KW"/>
</dbReference>
<dbReference type="GO" id="GO:0000209">
    <property type="term" value="P:protein polyubiquitination"/>
    <property type="evidence" value="ECO:0007669"/>
    <property type="project" value="InterPro"/>
</dbReference>
<dbReference type="CDD" id="cd16730">
    <property type="entry name" value="RING-HC_MKRN1_3"/>
    <property type="match status" value="1"/>
</dbReference>
<dbReference type="FunFam" id="3.30.40.10:FF:000117">
    <property type="entry name" value="Probable E3 ubiquitin-protein ligase makorin-1"/>
    <property type="match status" value="1"/>
</dbReference>
<dbReference type="Gene3D" id="4.10.1000.10">
    <property type="entry name" value="Zinc finger, CCCH-type"/>
    <property type="match status" value="1"/>
</dbReference>
<dbReference type="Gene3D" id="3.30.40.10">
    <property type="entry name" value="Zinc/RING finger domain, C3HC4 (zinc finger)"/>
    <property type="match status" value="1"/>
</dbReference>
<dbReference type="InterPro" id="IPR045072">
    <property type="entry name" value="MKRN-like"/>
</dbReference>
<dbReference type="InterPro" id="IPR031644">
    <property type="entry name" value="MKRN1_C"/>
</dbReference>
<dbReference type="InterPro" id="IPR041367">
    <property type="entry name" value="Znf-CCCH_4"/>
</dbReference>
<dbReference type="InterPro" id="IPR018957">
    <property type="entry name" value="Znf_C3HC4_RING-type"/>
</dbReference>
<dbReference type="InterPro" id="IPR000571">
    <property type="entry name" value="Znf_CCCH"/>
</dbReference>
<dbReference type="InterPro" id="IPR036855">
    <property type="entry name" value="Znf_CCCH_sf"/>
</dbReference>
<dbReference type="InterPro" id="IPR001841">
    <property type="entry name" value="Znf_RING"/>
</dbReference>
<dbReference type="InterPro" id="IPR013083">
    <property type="entry name" value="Znf_RING/FYVE/PHD"/>
</dbReference>
<dbReference type="InterPro" id="IPR017907">
    <property type="entry name" value="Znf_RING_CS"/>
</dbReference>
<dbReference type="PANTHER" id="PTHR11224:SF38">
    <property type="entry name" value="E3 UBIQUITIN-PROTEIN LIGASE MAKORIN-3-RELATED"/>
    <property type="match status" value="1"/>
</dbReference>
<dbReference type="PANTHER" id="PTHR11224">
    <property type="entry name" value="MAKORIN-RELATED"/>
    <property type="match status" value="1"/>
</dbReference>
<dbReference type="Pfam" id="PF15815">
    <property type="entry name" value="MKRN1_C"/>
    <property type="match status" value="1"/>
</dbReference>
<dbReference type="Pfam" id="PF00097">
    <property type="entry name" value="zf-C3HC4"/>
    <property type="match status" value="1"/>
</dbReference>
<dbReference type="Pfam" id="PF14608">
    <property type="entry name" value="zf-CCCH_2"/>
    <property type="match status" value="2"/>
</dbReference>
<dbReference type="Pfam" id="PF18044">
    <property type="entry name" value="zf-CCCH_4"/>
    <property type="match status" value="1"/>
</dbReference>
<dbReference type="SMART" id="SM00184">
    <property type="entry name" value="RING"/>
    <property type="match status" value="1"/>
</dbReference>
<dbReference type="SMART" id="SM00356">
    <property type="entry name" value="ZnF_C3H1"/>
    <property type="match status" value="3"/>
</dbReference>
<dbReference type="SUPFAM" id="SSF90229">
    <property type="entry name" value="CCCH zinc finger"/>
    <property type="match status" value="2"/>
</dbReference>
<dbReference type="SUPFAM" id="SSF57850">
    <property type="entry name" value="RING/U-box"/>
    <property type="match status" value="1"/>
</dbReference>
<dbReference type="PROSITE" id="PS50103">
    <property type="entry name" value="ZF_C3H1"/>
    <property type="match status" value="3"/>
</dbReference>
<dbReference type="PROSITE" id="PS00518">
    <property type="entry name" value="ZF_RING_1"/>
    <property type="match status" value="1"/>
</dbReference>
<dbReference type="PROSITE" id="PS50089">
    <property type="entry name" value="ZF_RING_2"/>
    <property type="match status" value="1"/>
</dbReference>
<comment type="function">
    <text evidence="1 8 9 10">E3 ubiquitin ligase catalyzing the covalent attachment of ubiquitin moieties onto substrate proteins. Acts as a key developmental timer that helps ensure puberty begins at the appropriate age, by inhibiting premature activation of the reproductive hormone cascade (PubMed:37092553). Epigenetically regulates GNRH1 transcription by disrupting the binding of methyl-DNA binding protein 3/MBD3 to the promoter of GNRH1. Mechanistically, mediates the non-proteolytic ubiquitination of MBD3 at multiple sites with 'Lys27' ubiquitin linkages and thereby regulates the methylation status of the genome, including GNRH1 promoter (PubMed:34692086). Modulates the stability and translation of GNRH1 mRNA by mediating the non-proteolytic ubiquitination of PABP family members PABPC1, PABPC3 and PABPC4 at multiple sites (PubMed:33744966). Also participates in the maintenance of genomic and epigenomic stability by regulating the abundance of APEX2 via 'Lys-48'-linked ubiquitination (By similarity).</text>
</comment>
<comment type="catalytic activity">
    <reaction>
        <text>S-ubiquitinyl-[E2 ubiquitin-conjugating enzyme]-L-cysteine + [acceptor protein]-L-lysine = [E2 ubiquitin-conjugating enzyme]-L-cysteine + N(6)-ubiquitinyl-[acceptor protein]-L-lysine.</text>
        <dbReference type="EC" id="2.3.2.27"/>
    </reaction>
</comment>
<comment type="pathway">
    <text>Protein modification; protein ubiquitination.</text>
</comment>
<comment type="subcellular location">
    <subcellularLocation>
        <location evidence="9">Nucleus</location>
    </subcellularLocation>
</comment>
<comment type="tissue specificity">
    <text evidence="5 6 8">Mainly expressed in mouse brain and reproductive system including testis and ovary (PubMed:33744966). Ubiquitously detected at low levels throughout the entire embryo, but expression is highest in the ventricular layers of the brain.</text>
</comment>
<comment type="developmental stage">
    <text evidence="5 7">Expressed at the blastocyst stage and the embryonic days 8-17, as well as in undifferentiated and differentiated embryonic stem cells. Expressed in the arcuate nucleus of both male and female animals. Levels of expression are highest on postnatal days 10 and 12, begin to decline on day 15, and reaches a nadir by days 18 to 22, at which time expression is 10 to 20% of the levels detected at 10 days. The timing of the decline in protein expression correlated with the ages at which arcuate KISS1 and TAC2 have been shown to increase, heralding the onset of puberty.</text>
</comment>
<comment type="disruption phenotype">
    <text evidence="9 10">Mkrn3 deletion lead to early puberty onset in female mice (PubMed:37092553). Mkrn3 deficiency also promotes DNA demethylation in the hypothalamus of mice (PubMed:34692086).</text>
</comment>
<comment type="miscellaneous">
    <text>Imprinted, expressed from the paternal chromosome only. The maternal methylation is established promptly after fertilization prior to syngamy.</text>
</comment>
<evidence type="ECO:0000250" key="1">
    <source>
        <dbReference type="UniProtKB" id="Q13064"/>
    </source>
</evidence>
<evidence type="ECO:0000255" key="2">
    <source>
        <dbReference type="PROSITE-ProRule" id="PRU00175"/>
    </source>
</evidence>
<evidence type="ECO:0000255" key="3">
    <source>
        <dbReference type="PROSITE-ProRule" id="PRU00723"/>
    </source>
</evidence>
<evidence type="ECO:0000256" key="4">
    <source>
        <dbReference type="SAM" id="MobiDB-lite"/>
    </source>
</evidence>
<evidence type="ECO:0000269" key="5">
    <source>
    </source>
</evidence>
<evidence type="ECO:0000269" key="6">
    <source>
    </source>
</evidence>
<evidence type="ECO:0000269" key="7">
    <source>
    </source>
</evidence>
<evidence type="ECO:0000269" key="8">
    <source>
    </source>
</evidence>
<evidence type="ECO:0000269" key="9">
    <source>
    </source>
</evidence>
<evidence type="ECO:0000269" key="10">
    <source>
    </source>
</evidence>
<evidence type="ECO:0000305" key="11"/>